<reference key="1">
    <citation type="journal article" date="1996" name="Mol. Phylogenet. Evol.">
        <title>Phylogenetic inferences from chloroplast chlB gene sequences of Nephrolepis exaltata (Filicopsida), Ephedra altissima (Gnetopsida), and diverse land plants.</title>
        <authorList>
            <person name="Boivin R."/>
            <person name="Richard M."/>
            <person name="Beauseigle D."/>
            <person name="Bousquet J."/>
            <person name="Bellemare G."/>
        </authorList>
    </citation>
    <scope>NUCLEOTIDE SEQUENCE [GENOMIC DNA]</scope>
</reference>
<comment type="function">
    <text evidence="1">Component of the dark-operative protochlorophyllide reductase (DPOR) that uses Mg-ATP and reduced ferredoxin to reduce ring D of protochlorophyllide (Pchlide) to form chlorophyllide a (Chlide). This reaction is light-independent. The NB-protein (ChlN-ChlB) is the catalytic component of the complex (By similarity).</text>
</comment>
<comment type="catalytic activity">
    <reaction>
        <text>chlorophyllide a + oxidized 2[4Fe-4S]-[ferredoxin] + 2 ADP + 2 phosphate = protochlorophyllide a + reduced 2[4Fe-4S]-[ferredoxin] + 2 ATP + 2 H2O</text>
        <dbReference type="Rhea" id="RHEA:28202"/>
        <dbReference type="Rhea" id="RHEA-COMP:10002"/>
        <dbReference type="Rhea" id="RHEA-COMP:10004"/>
        <dbReference type="ChEBI" id="CHEBI:15377"/>
        <dbReference type="ChEBI" id="CHEBI:30616"/>
        <dbReference type="ChEBI" id="CHEBI:33722"/>
        <dbReference type="ChEBI" id="CHEBI:33723"/>
        <dbReference type="ChEBI" id="CHEBI:43474"/>
        <dbReference type="ChEBI" id="CHEBI:83348"/>
        <dbReference type="ChEBI" id="CHEBI:83350"/>
        <dbReference type="ChEBI" id="CHEBI:456216"/>
        <dbReference type="EC" id="1.3.7.7"/>
    </reaction>
</comment>
<comment type="cofactor">
    <cofactor evidence="1">
        <name>[4Fe-4S] cluster</name>
        <dbReference type="ChEBI" id="CHEBI:49883"/>
    </cofactor>
    <text evidence="1">Binds 1 [4Fe-4S] cluster per heterodimer. The cluster is bound at the heterodimer interface by residues from both subunits.</text>
</comment>
<comment type="pathway">
    <text>Porphyrin-containing compound metabolism; chlorophyll biosynthesis (light-independent).</text>
</comment>
<comment type="subunit">
    <text evidence="1">Protochlorophyllide reductase is composed of three subunits; ChlL, ChlN and ChlB. Forms a heterotetramer of two ChlB and two ChlN subunits (By similarity).</text>
</comment>
<comment type="subcellular location">
    <subcellularLocation>
        <location>Plastid</location>
        <location>Chloroplast</location>
    </subcellularLocation>
</comment>
<comment type="similarity">
    <text evidence="2">Belongs to the ChlB/BchB/BchZ family.</text>
</comment>
<organism>
    <name type="scientific">Zamia fischeri</name>
    <name type="common">Cycad</name>
    <dbReference type="NCBI Taxonomy" id="34342"/>
    <lineage>
        <taxon>Eukaryota</taxon>
        <taxon>Viridiplantae</taxon>
        <taxon>Streptophyta</taxon>
        <taxon>Embryophyta</taxon>
        <taxon>Tracheophyta</taxon>
        <taxon>Spermatophyta</taxon>
        <taxon>Cycadidae</taxon>
        <taxon>Cycadales</taxon>
        <taxon>Zamiaceae</taxon>
        <taxon>Zamia</taxon>
    </lineage>
</organism>
<proteinExistence type="inferred from homology"/>
<accession>P37857</accession>
<feature type="chain" id="PRO_0000219847" description="Light-independent protochlorophyllide reductase subunit B">
    <location>
        <begin position="1" status="less than"/>
        <end position="103" status="greater than"/>
    </location>
</feature>
<feature type="non-terminal residue">
    <location>
        <position position="1"/>
    </location>
</feature>
<feature type="non-terminal residue">
    <location>
        <position position="103"/>
    </location>
</feature>
<keyword id="KW-0004">4Fe-4S</keyword>
<keyword id="KW-0067">ATP-binding</keyword>
<keyword id="KW-0149">Chlorophyll biosynthesis</keyword>
<keyword id="KW-0150">Chloroplast</keyword>
<keyword id="KW-0408">Iron</keyword>
<keyword id="KW-0411">Iron-sulfur</keyword>
<keyword id="KW-0479">Metal-binding</keyword>
<keyword id="KW-0547">Nucleotide-binding</keyword>
<keyword id="KW-0560">Oxidoreductase</keyword>
<keyword id="KW-0602">Photosynthesis</keyword>
<keyword id="KW-0934">Plastid</keyword>
<name>CHLB_ZAMFI</name>
<dbReference type="EC" id="1.3.7.7"/>
<dbReference type="EMBL" id="L25778">
    <property type="protein sequence ID" value="AAC37499.1"/>
    <property type="molecule type" value="Genomic_DNA"/>
</dbReference>
<dbReference type="SMR" id="P37857"/>
<dbReference type="UniPathway" id="UPA00670"/>
<dbReference type="GO" id="GO:0009507">
    <property type="term" value="C:chloroplast"/>
    <property type="evidence" value="ECO:0007669"/>
    <property type="project" value="UniProtKB-SubCell"/>
</dbReference>
<dbReference type="GO" id="GO:0051539">
    <property type="term" value="F:4 iron, 4 sulfur cluster binding"/>
    <property type="evidence" value="ECO:0007669"/>
    <property type="project" value="UniProtKB-KW"/>
</dbReference>
<dbReference type="GO" id="GO:0005524">
    <property type="term" value="F:ATP binding"/>
    <property type="evidence" value="ECO:0007669"/>
    <property type="project" value="UniProtKB-KW"/>
</dbReference>
<dbReference type="GO" id="GO:0046872">
    <property type="term" value="F:metal ion binding"/>
    <property type="evidence" value="ECO:0007669"/>
    <property type="project" value="UniProtKB-KW"/>
</dbReference>
<dbReference type="GO" id="GO:0016491">
    <property type="term" value="F:oxidoreductase activity"/>
    <property type="evidence" value="ECO:0007669"/>
    <property type="project" value="UniProtKB-KW"/>
</dbReference>
<dbReference type="GO" id="GO:0036068">
    <property type="term" value="P:light-independent chlorophyll biosynthetic process"/>
    <property type="evidence" value="ECO:0007669"/>
    <property type="project" value="UniProtKB-UniPathway"/>
</dbReference>
<dbReference type="GO" id="GO:0015979">
    <property type="term" value="P:photosynthesis"/>
    <property type="evidence" value="ECO:0007669"/>
    <property type="project" value="UniProtKB-KW"/>
</dbReference>
<dbReference type="Gene3D" id="3.40.50.1980">
    <property type="entry name" value="Nitrogenase molybdenum iron protein domain"/>
    <property type="match status" value="1"/>
</dbReference>
<dbReference type="InterPro" id="IPR050152">
    <property type="entry name" value="ChlB/BchB/BchZ"/>
</dbReference>
<dbReference type="InterPro" id="IPR000510">
    <property type="entry name" value="Nase/OxRdtase_comp1"/>
</dbReference>
<dbReference type="PANTHER" id="PTHR33712">
    <property type="entry name" value="LIGHT-INDEPENDENT PROTOCHLOROPHYLLIDE REDUCTASE SUBUNIT B"/>
    <property type="match status" value="1"/>
</dbReference>
<dbReference type="PANTHER" id="PTHR33712:SF7">
    <property type="entry name" value="LIGHT-INDEPENDENT PROTOCHLOROPHYLLIDE REDUCTASE SUBUNIT B"/>
    <property type="match status" value="1"/>
</dbReference>
<dbReference type="Pfam" id="PF00148">
    <property type="entry name" value="Oxidored_nitro"/>
    <property type="match status" value="1"/>
</dbReference>
<dbReference type="SUPFAM" id="SSF53807">
    <property type="entry name" value="Helical backbone' metal receptor"/>
    <property type="match status" value="1"/>
</dbReference>
<gene>
    <name type="primary">chlB</name>
</gene>
<protein>
    <recommendedName>
        <fullName>Light-independent protochlorophyllide reductase subunit B</fullName>
        <shortName>DPOR subunit B</shortName>
        <shortName>LI-POR subunit B</shortName>
        <ecNumber>1.3.7.7</ecNumber>
    </recommendedName>
</protein>
<geneLocation type="chloroplast"/>
<evidence type="ECO:0000250" key="1"/>
<evidence type="ECO:0000305" key="2"/>
<sequence length="103" mass="11839">RRLLRDLNIKINQVIPEGGSVKDLKNLPKAWFNLVPYREVGLMTAMYLEKKFGMPYVSTTPMGVVDMAECIQQIQRSVNTLAPTSSNKKVDYEPYIDEQTRFV</sequence>